<protein>
    <recommendedName>
        <fullName>Caprin-2</fullName>
    </recommendedName>
    <alternativeName>
        <fullName>RNA granule protein 140</fullName>
    </alternativeName>
</protein>
<comment type="function">
    <text evidence="1">Promotes phosphorylation of the Wnt coreceptor LRP6, leading to increased activity of the canonical Wnt signaling pathway. Facilitates constitutive LRP6 phosphorylation by CDK14/CCNY during G2/M stage of the cell cycle, which may potentiate cells for Wnt signaling. May regulate the transport and translation of mRNAs, modulating for instance the expression of proteins involved in synaptic plasticity in neurons. Involved in regulation of growth as erythroblasts shift from a highly proliferative state towards their terminal phase of differentiation. May be involved in apoptosis.</text>
</comment>
<comment type="subunit">
    <text evidence="5">Homotrimer; via C1q domain.</text>
</comment>
<comment type="subcellular location">
    <subcellularLocation>
        <location evidence="1">Cytoplasm</location>
    </subcellularLocation>
    <subcellularLocation>
        <location>Cell membrane</location>
        <topology evidence="1">Peripheral membrane protein</topology>
    </subcellularLocation>
</comment>
<comment type="domain">
    <text evidence="1">The C1q domain is essential for the function in Wnt signaling.</text>
</comment>
<comment type="disruption phenotype">
    <text evidence="4">Morpholino knockdown results in a dorsalized phenotype, with enlargement of the telencephalon and reduction of the tail at 24 hours post-fertilization. Expression of the dorsal marker goosecoid is expanded, whereas expression of the ventral markers eve1 and tbx6 is reduced. In addition, expression of the telencephalon marker opl and the midbrain/hindbrain boundary marker pax2.1 is expanded posteriorly.</text>
</comment>
<comment type="similarity">
    <text evidence="6">Belongs to the caprin family.</text>
</comment>
<gene>
    <name evidence="7" type="primary">caprin2</name>
    <name type="synonym">rng140</name>
    <name type="ORF">si:ch211-11c20.4</name>
</gene>
<keyword id="KW-0002">3D-structure</keyword>
<keyword id="KW-0106">Calcium</keyword>
<keyword id="KW-1003">Cell membrane</keyword>
<keyword id="KW-0963">Cytoplasm</keyword>
<keyword id="KW-0221">Differentiation</keyword>
<keyword id="KW-0341">Growth regulation</keyword>
<keyword id="KW-0472">Membrane</keyword>
<keyword id="KW-0479">Metal-binding</keyword>
<keyword id="KW-0652">Protein synthesis inhibitor</keyword>
<keyword id="KW-1185">Reference proteome</keyword>
<keyword id="KW-0694">RNA-binding</keyword>
<dbReference type="EMBL" id="BX001012">
    <property type="protein sequence ID" value="CAI11565.1"/>
    <property type="molecule type" value="Genomic_DNA"/>
</dbReference>
<dbReference type="EMBL" id="BC057503">
    <property type="protein sequence ID" value="AAH57503.1"/>
    <property type="molecule type" value="mRNA"/>
</dbReference>
<dbReference type="RefSeq" id="NP_001013291.1">
    <property type="nucleotide sequence ID" value="NM_001013273.1"/>
</dbReference>
<dbReference type="PDB" id="4OUS">
    <property type="method" value="X-ray"/>
    <property type="resolution" value="1.05 A"/>
    <property type="chains" value="A=780-914"/>
</dbReference>
<dbReference type="PDBsum" id="4OUS"/>
<dbReference type="SMR" id="Q5RJ80"/>
<dbReference type="FunCoup" id="Q5RJ80">
    <property type="interactions" value="1217"/>
</dbReference>
<dbReference type="STRING" id="7955.ENSDARP00000040707"/>
<dbReference type="PaxDb" id="7955-ENSDARP00000040707"/>
<dbReference type="Ensembl" id="ENSDART00000040708">
    <property type="protein sequence ID" value="ENSDARP00000040707"/>
    <property type="gene ID" value="ENSDARG00000020749"/>
</dbReference>
<dbReference type="GeneID" id="407729"/>
<dbReference type="KEGG" id="dre:407729"/>
<dbReference type="AGR" id="ZFIN:ZDB-GENE-040812-2"/>
<dbReference type="CTD" id="65981"/>
<dbReference type="ZFIN" id="ZDB-GENE-040812-2">
    <property type="gene designation" value="caprin2"/>
</dbReference>
<dbReference type="eggNOG" id="ENOG502QQ53">
    <property type="taxonomic scope" value="Eukaryota"/>
</dbReference>
<dbReference type="HOGENOM" id="CLU_009305_1_0_1"/>
<dbReference type="InParanoid" id="Q5RJ80"/>
<dbReference type="OMA" id="NHNQHGE"/>
<dbReference type="OrthoDB" id="10062814at2759"/>
<dbReference type="PhylomeDB" id="Q5RJ80"/>
<dbReference type="TreeFam" id="TF329471"/>
<dbReference type="SignaLink" id="Q5RJ80"/>
<dbReference type="EvolutionaryTrace" id="Q5RJ80"/>
<dbReference type="PRO" id="PR:Q5RJ80"/>
<dbReference type="Proteomes" id="UP000000437">
    <property type="component" value="Chromosome 4"/>
</dbReference>
<dbReference type="Bgee" id="ENSDARG00000020749">
    <property type="expression patterns" value="Expressed in cleaving embryo and 19 other cell types or tissues"/>
</dbReference>
<dbReference type="ExpressionAtlas" id="Q5RJ80">
    <property type="expression patterns" value="baseline"/>
</dbReference>
<dbReference type="GO" id="GO:0005737">
    <property type="term" value="C:cytoplasm"/>
    <property type="evidence" value="ECO:0000318"/>
    <property type="project" value="GO_Central"/>
</dbReference>
<dbReference type="GO" id="GO:0005886">
    <property type="term" value="C:plasma membrane"/>
    <property type="evidence" value="ECO:0007669"/>
    <property type="project" value="UniProtKB-SubCell"/>
</dbReference>
<dbReference type="GO" id="GO:0046872">
    <property type="term" value="F:metal ion binding"/>
    <property type="evidence" value="ECO:0007669"/>
    <property type="project" value="UniProtKB-KW"/>
</dbReference>
<dbReference type="GO" id="GO:0003723">
    <property type="term" value="F:RNA binding"/>
    <property type="evidence" value="ECO:0007669"/>
    <property type="project" value="UniProtKB-KW"/>
</dbReference>
<dbReference type="GO" id="GO:0005102">
    <property type="term" value="F:signaling receptor binding"/>
    <property type="evidence" value="ECO:0000318"/>
    <property type="project" value="GO_Central"/>
</dbReference>
<dbReference type="GO" id="GO:0030154">
    <property type="term" value="P:cell differentiation"/>
    <property type="evidence" value="ECO:0007669"/>
    <property type="project" value="UniProtKB-KW"/>
</dbReference>
<dbReference type="GO" id="GO:0009950">
    <property type="term" value="P:dorsal/ventral axis specification"/>
    <property type="evidence" value="ECO:0000315"/>
    <property type="project" value="BHF-UCL"/>
</dbReference>
<dbReference type="GO" id="GO:0009953">
    <property type="term" value="P:dorsal/ventral pattern formation"/>
    <property type="evidence" value="ECO:0000315"/>
    <property type="project" value="ZFIN"/>
</dbReference>
<dbReference type="GO" id="GO:0017148">
    <property type="term" value="P:negative regulation of translation"/>
    <property type="evidence" value="ECO:0007669"/>
    <property type="project" value="UniProtKB-KW"/>
</dbReference>
<dbReference type="GO" id="GO:0090263">
    <property type="term" value="P:positive regulation of canonical Wnt signaling pathway"/>
    <property type="evidence" value="ECO:0000315"/>
    <property type="project" value="BHF-UCL"/>
</dbReference>
<dbReference type="GO" id="GO:0050775">
    <property type="term" value="P:positive regulation of dendrite morphogenesis"/>
    <property type="evidence" value="ECO:0000250"/>
    <property type="project" value="UniProtKB"/>
</dbReference>
<dbReference type="GO" id="GO:0061003">
    <property type="term" value="P:positive regulation of dendritic spine morphogenesis"/>
    <property type="evidence" value="ECO:0000250"/>
    <property type="project" value="UniProtKB"/>
</dbReference>
<dbReference type="GO" id="GO:0030177">
    <property type="term" value="P:positive regulation of Wnt signaling pathway"/>
    <property type="evidence" value="ECO:0000315"/>
    <property type="project" value="ZFIN"/>
</dbReference>
<dbReference type="Gene3D" id="2.60.120.40">
    <property type="match status" value="1"/>
</dbReference>
<dbReference type="InterPro" id="IPR001073">
    <property type="entry name" value="C1q_dom"/>
</dbReference>
<dbReference type="InterPro" id="IPR028816">
    <property type="entry name" value="Caprin"/>
</dbReference>
<dbReference type="InterPro" id="IPR022070">
    <property type="entry name" value="Caprin-1_C"/>
</dbReference>
<dbReference type="InterPro" id="IPR041637">
    <property type="entry name" value="Caprin-1_dimer"/>
</dbReference>
<dbReference type="InterPro" id="IPR008983">
    <property type="entry name" value="Tumour_necrosis_fac-like_dom"/>
</dbReference>
<dbReference type="PANTHER" id="PTHR22922:SF5">
    <property type="entry name" value="CAPRIN-2"/>
    <property type="match status" value="1"/>
</dbReference>
<dbReference type="PANTHER" id="PTHR22922">
    <property type="entry name" value="GPI-ANCHORED PROTEIN P137"/>
    <property type="match status" value="1"/>
</dbReference>
<dbReference type="Pfam" id="PF00386">
    <property type="entry name" value="C1q"/>
    <property type="match status" value="1"/>
</dbReference>
<dbReference type="Pfam" id="PF12287">
    <property type="entry name" value="Caprin-1_C"/>
    <property type="match status" value="1"/>
</dbReference>
<dbReference type="Pfam" id="PF18293">
    <property type="entry name" value="Caprin-1_dimer"/>
    <property type="match status" value="1"/>
</dbReference>
<dbReference type="PRINTS" id="PR00007">
    <property type="entry name" value="COMPLEMNTC1Q"/>
</dbReference>
<dbReference type="SMART" id="SM00110">
    <property type="entry name" value="C1Q"/>
    <property type="match status" value="1"/>
</dbReference>
<dbReference type="SUPFAM" id="SSF49842">
    <property type="entry name" value="TNF-like"/>
    <property type="match status" value="1"/>
</dbReference>
<dbReference type="PROSITE" id="PS50871">
    <property type="entry name" value="C1Q"/>
    <property type="match status" value="1"/>
</dbReference>
<name>CAPR2_DANRE</name>
<proteinExistence type="evidence at protein level"/>
<accession>Q5RJ80</accession>
<accession>Q6PFL5</accession>
<sequence>MRKTETMVQLSPSRTLETLTPSELTVEKDDGQGSPKPESPRMLSALQLALSSTTVYCGYEKYIEDGLICLKHKIRNIEKKKLKLERYSDKLKKGEKLNEDQLEAVGKYDEVVHNLKFAKELQKTIGSLTQDLLKAQRKAVRQEKQMKTDEEKSRLSLMLQVQYVLHSLQREDVRKNFCNTRQYSCYMSTQDMEGLMDLASLVGCKRDYSISLEDQMRRAAIVYWELLEGNEKPVAGSTYKHMKEKLLRLVDSGFFDNIPLPKSDSQEKTETIKPDSQSRPSGLTTLVKLSSNEVPSKEFLNRRYMPETDERRRGETASPRNWKEDFLAMKEREPPDSWEMEELADPPASSQSPIQKPWKGAAGLIPKTVDIVKRSTTDPKEKRQRKKAEQDSKSMPVAVEVFSSPSPLPKDPVQRRQQLETLMDQISGSFSFMQESLLDGESSPVNTQTKRCRPSPGSSTPIVQRELTKSPSDILPSSQRSTPLRILLSGEGKGCLSNGDRSINGSDLELHSEDKPRKQAEGFNSPPLYRRGSSISVSLENQSTVQAGRQMLCNGVSSSGSAQTFSTPPSRRSISAENPFHNIHSVFNVIGESSGMKADESGFSESIHRSFTSAKTSSVTTASTQTPPELNPPEEDLQIEGQYPLECAVSAGGPVFSSSHSRVGQSCYSRGAVRGGYDAYRVNVRSPGGSFMSQTHREPASALYMARENGYQQNFKRGAGTATQRSSAGWSDSSQVSSPDRDGAYPLDSGLSDTLSIPAMEVPMNPQGPHTLMPVHVYPLTQLRVAFSAARTANFAPGTLDQPIAFDLLHTNLGDMFDTGSGRFTCPATGAYVFIFHILKLAISVPLYINLMRNEEVMVSAYANDGAPDHETASNHAVLQLFQGDQVWLRLHRGAIYGSSWKYSTFSGFLLYQD</sequence>
<feature type="chain" id="PRO_0000302084" description="Caprin-2">
    <location>
        <begin position="1"/>
        <end position="914"/>
    </location>
</feature>
<feature type="domain" description="C1q" evidence="2">
    <location>
        <begin position="780"/>
        <end position="914"/>
    </location>
</feature>
<feature type="region of interest" description="Disordered" evidence="3">
    <location>
        <begin position="259"/>
        <end position="283"/>
    </location>
</feature>
<feature type="region of interest" description="Disordered" evidence="3">
    <location>
        <begin position="298"/>
        <end position="326"/>
    </location>
</feature>
<feature type="region of interest" description="Disordered" evidence="3">
    <location>
        <begin position="367"/>
        <end position="411"/>
    </location>
</feature>
<feature type="region of interest" description="Disordered" evidence="3">
    <location>
        <begin position="439"/>
        <end position="480"/>
    </location>
</feature>
<feature type="region of interest" description="Disordered" evidence="3">
    <location>
        <begin position="495"/>
        <end position="529"/>
    </location>
</feature>
<feature type="region of interest" description="Disordered" evidence="3">
    <location>
        <begin position="608"/>
        <end position="631"/>
    </location>
</feature>
<feature type="region of interest" description="Disordered" evidence="3">
    <location>
        <begin position="718"/>
        <end position="747"/>
    </location>
</feature>
<feature type="compositionally biased region" description="Basic and acidic residues" evidence="3">
    <location>
        <begin position="264"/>
        <end position="273"/>
    </location>
</feature>
<feature type="compositionally biased region" description="Polar residues" evidence="3">
    <location>
        <begin position="274"/>
        <end position="283"/>
    </location>
</feature>
<feature type="compositionally biased region" description="Basic and acidic residues" evidence="3">
    <location>
        <begin position="370"/>
        <end position="392"/>
    </location>
</feature>
<feature type="compositionally biased region" description="Polar residues" evidence="3">
    <location>
        <begin position="469"/>
        <end position="480"/>
    </location>
</feature>
<feature type="compositionally biased region" description="Basic and acidic residues" evidence="3">
    <location>
        <begin position="508"/>
        <end position="520"/>
    </location>
</feature>
<feature type="compositionally biased region" description="Low complexity" evidence="3">
    <location>
        <begin position="610"/>
        <end position="626"/>
    </location>
</feature>
<feature type="compositionally biased region" description="Polar residues" evidence="3">
    <location>
        <begin position="718"/>
        <end position="738"/>
    </location>
</feature>
<feature type="binding site" evidence="1">
    <location>
        <position position="865"/>
    </location>
    <ligand>
        <name>Ca(2+)</name>
        <dbReference type="ChEBI" id="CHEBI:29108"/>
        <label>1</label>
        <note>ligand shared between two neighboring subunits</note>
    </ligand>
</feature>
<feature type="binding site" evidence="5">
    <location>
        <position position="871"/>
    </location>
    <ligand>
        <name>Ca(2+)</name>
        <dbReference type="ChEBI" id="CHEBI:29108"/>
        <label>2</label>
        <note>ligand shared between two neighboring subunits</note>
    </ligand>
</feature>
<feature type="sequence conflict" description="In Ref. 2; AAH57503." evidence="6" ref="2">
    <original>S</original>
    <variation>N</variation>
    <location>
        <position position="726"/>
    </location>
</feature>
<feature type="strand" evidence="10">
    <location>
        <begin position="786"/>
        <end position="791"/>
    </location>
</feature>
<feature type="strand" evidence="10">
    <location>
        <begin position="798"/>
        <end position="803"/>
    </location>
</feature>
<feature type="strand" evidence="10">
    <location>
        <begin position="808"/>
        <end position="813"/>
    </location>
</feature>
<feature type="turn" evidence="10">
    <location>
        <begin position="819"/>
        <end position="822"/>
    </location>
</feature>
<feature type="strand" evidence="10">
    <location>
        <begin position="823"/>
        <end position="825"/>
    </location>
</feature>
<feature type="strand" evidence="10">
    <location>
        <begin position="827"/>
        <end position="840"/>
    </location>
</feature>
<feature type="strand" evidence="10">
    <location>
        <begin position="842"/>
        <end position="845"/>
    </location>
</feature>
<feature type="strand" evidence="10">
    <location>
        <begin position="847"/>
        <end position="853"/>
    </location>
</feature>
<feature type="strand" evidence="10">
    <location>
        <begin position="856"/>
        <end position="863"/>
    </location>
</feature>
<feature type="strand" evidence="10">
    <location>
        <begin position="872"/>
        <end position="881"/>
    </location>
</feature>
<feature type="strand" evidence="10">
    <location>
        <begin position="886"/>
        <end position="894"/>
    </location>
</feature>
<feature type="strand" evidence="10">
    <location>
        <begin position="904"/>
        <end position="913"/>
    </location>
</feature>
<organism>
    <name type="scientific">Danio rerio</name>
    <name type="common">Zebrafish</name>
    <name type="synonym">Brachydanio rerio</name>
    <dbReference type="NCBI Taxonomy" id="7955"/>
    <lineage>
        <taxon>Eukaryota</taxon>
        <taxon>Metazoa</taxon>
        <taxon>Chordata</taxon>
        <taxon>Craniata</taxon>
        <taxon>Vertebrata</taxon>
        <taxon>Euteleostomi</taxon>
        <taxon>Actinopterygii</taxon>
        <taxon>Neopterygii</taxon>
        <taxon>Teleostei</taxon>
        <taxon>Ostariophysi</taxon>
        <taxon>Cypriniformes</taxon>
        <taxon>Danionidae</taxon>
        <taxon>Danioninae</taxon>
        <taxon>Danio</taxon>
    </lineage>
</organism>
<reference key="1">
    <citation type="journal article" date="2013" name="Nature">
        <title>The zebrafish reference genome sequence and its relationship to the human genome.</title>
        <authorList>
            <person name="Howe K."/>
            <person name="Clark M.D."/>
            <person name="Torroja C.F."/>
            <person name="Torrance J."/>
            <person name="Berthelot C."/>
            <person name="Muffato M."/>
            <person name="Collins J.E."/>
            <person name="Humphray S."/>
            <person name="McLaren K."/>
            <person name="Matthews L."/>
            <person name="McLaren S."/>
            <person name="Sealy I."/>
            <person name="Caccamo M."/>
            <person name="Churcher C."/>
            <person name="Scott C."/>
            <person name="Barrett J.C."/>
            <person name="Koch R."/>
            <person name="Rauch G.J."/>
            <person name="White S."/>
            <person name="Chow W."/>
            <person name="Kilian B."/>
            <person name="Quintais L.T."/>
            <person name="Guerra-Assuncao J.A."/>
            <person name="Zhou Y."/>
            <person name="Gu Y."/>
            <person name="Yen J."/>
            <person name="Vogel J.H."/>
            <person name="Eyre T."/>
            <person name="Redmond S."/>
            <person name="Banerjee R."/>
            <person name="Chi J."/>
            <person name="Fu B."/>
            <person name="Langley E."/>
            <person name="Maguire S.F."/>
            <person name="Laird G.K."/>
            <person name="Lloyd D."/>
            <person name="Kenyon E."/>
            <person name="Donaldson S."/>
            <person name="Sehra H."/>
            <person name="Almeida-King J."/>
            <person name="Loveland J."/>
            <person name="Trevanion S."/>
            <person name="Jones M."/>
            <person name="Quail M."/>
            <person name="Willey D."/>
            <person name="Hunt A."/>
            <person name="Burton J."/>
            <person name="Sims S."/>
            <person name="McLay K."/>
            <person name="Plumb B."/>
            <person name="Davis J."/>
            <person name="Clee C."/>
            <person name="Oliver K."/>
            <person name="Clark R."/>
            <person name="Riddle C."/>
            <person name="Elliot D."/>
            <person name="Threadgold G."/>
            <person name="Harden G."/>
            <person name="Ware D."/>
            <person name="Begum S."/>
            <person name="Mortimore B."/>
            <person name="Kerry G."/>
            <person name="Heath P."/>
            <person name="Phillimore B."/>
            <person name="Tracey A."/>
            <person name="Corby N."/>
            <person name="Dunn M."/>
            <person name="Johnson C."/>
            <person name="Wood J."/>
            <person name="Clark S."/>
            <person name="Pelan S."/>
            <person name="Griffiths G."/>
            <person name="Smith M."/>
            <person name="Glithero R."/>
            <person name="Howden P."/>
            <person name="Barker N."/>
            <person name="Lloyd C."/>
            <person name="Stevens C."/>
            <person name="Harley J."/>
            <person name="Holt K."/>
            <person name="Panagiotidis G."/>
            <person name="Lovell J."/>
            <person name="Beasley H."/>
            <person name="Henderson C."/>
            <person name="Gordon D."/>
            <person name="Auger K."/>
            <person name="Wright D."/>
            <person name="Collins J."/>
            <person name="Raisen C."/>
            <person name="Dyer L."/>
            <person name="Leung K."/>
            <person name="Robertson L."/>
            <person name="Ambridge K."/>
            <person name="Leongamornlert D."/>
            <person name="McGuire S."/>
            <person name="Gilderthorp R."/>
            <person name="Griffiths C."/>
            <person name="Manthravadi D."/>
            <person name="Nichol S."/>
            <person name="Barker G."/>
            <person name="Whitehead S."/>
            <person name="Kay M."/>
            <person name="Brown J."/>
            <person name="Murnane C."/>
            <person name="Gray E."/>
            <person name="Humphries M."/>
            <person name="Sycamore N."/>
            <person name="Barker D."/>
            <person name="Saunders D."/>
            <person name="Wallis J."/>
            <person name="Babbage A."/>
            <person name="Hammond S."/>
            <person name="Mashreghi-Mohammadi M."/>
            <person name="Barr L."/>
            <person name="Martin S."/>
            <person name="Wray P."/>
            <person name="Ellington A."/>
            <person name="Matthews N."/>
            <person name="Ellwood M."/>
            <person name="Woodmansey R."/>
            <person name="Clark G."/>
            <person name="Cooper J."/>
            <person name="Tromans A."/>
            <person name="Grafham D."/>
            <person name="Skuce C."/>
            <person name="Pandian R."/>
            <person name="Andrews R."/>
            <person name="Harrison E."/>
            <person name="Kimberley A."/>
            <person name="Garnett J."/>
            <person name="Fosker N."/>
            <person name="Hall R."/>
            <person name="Garner P."/>
            <person name="Kelly D."/>
            <person name="Bird C."/>
            <person name="Palmer S."/>
            <person name="Gehring I."/>
            <person name="Berger A."/>
            <person name="Dooley C.M."/>
            <person name="Ersan-Urun Z."/>
            <person name="Eser C."/>
            <person name="Geiger H."/>
            <person name="Geisler M."/>
            <person name="Karotki L."/>
            <person name="Kirn A."/>
            <person name="Konantz J."/>
            <person name="Konantz M."/>
            <person name="Oberlander M."/>
            <person name="Rudolph-Geiger S."/>
            <person name="Teucke M."/>
            <person name="Lanz C."/>
            <person name="Raddatz G."/>
            <person name="Osoegawa K."/>
            <person name="Zhu B."/>
            <person name="Rapp A."/>
            <person name="Widaa S."/>
            <person name="Langford C."/>
            <person name="Yang F."/>
            <person name="Schuster S.C."/>
            <person name="Carter N.P."/>
            <person name="Harrow J."/>
            <person name="Ning Z."/>
            <person name="Herrero J."/>
            <person name="Searle S.M."/>
            <person name="Enright A."/>
            <person name="Geisler R."/>
            <person name="Plasterk R.H."/>
            <person name="Lee C."/>
            <person name="Westerfield M."/>
            <person name="de Jong P.J."/>
            <person name="Zon L.I."/>
            <person name="Postlethwait J.H."/>
            <person name="Nusslein-Volhard C."/>
            <person name="Hubbard T.J."/>
            <person name="Roest Crollius H."/>
            <person name="Rogers J."/>
            <person name="Stemple D.L."/>
        </authorList>
    </citation>
    <scope>NUCLEOTIDE SEQUENCE [LARGE SCALE GENOMIC DNA]</scope>
    <source>
        <strain>Tuebingen</strain>
    </source>
</reference>
<reference evidence="6 8" key="2">
    <citation type="submission" date="2003-09" db="EMBL/GenBank/DDBJ databases">
        <authorList>
            <consortium name="NIH - Zebrafish Gene Collection (ZGC) project"/>
        </authorList>
    </citation>
    <scope>NUCLEOTIDE SEQUENCE [LARGE SCALE MRNA] OF 714-914</scope>
    <source>
        <tissue evidence="7">Embryo</tissue>
    </source>
</reference>
<reference key="3">
    <citation type="journal article" date="2008" name="J. Cell Biol.">
        <title>Caprin-2 enhances canonical Wnt signaling through regulating LRP5/6 phosphorylation.</title>
        <authorList>
            <person name="Ding Y."/>
            <person name="Xi Y."/>
            <person name="Chen T."/>
            <person name="Wang J.Y."/>
            <person name="Tao D.L."/>
            <person name="Wu Z.L."/>
            <person name="Li Y.P."/>
            <person name="Li C."/>
            <person name="Zeng R."/>
            <person name="Li L."/>
        </authorList>
    </citation>
    <scope>DISRUPTION PHENOTYPE</scope>
</reference>
<reference evidence="9" key="4">
    <citation type="journal article" date="2014" name="J. Biol. Chem.">
        <title>Structural insights into the C1q domain of Caprin-2 in canonical Wnt signaling.</title>
        <authorList>
            <person name="Miao H."/>
            <person name="Jia Y."/>
            <person name="Xie S."/>
            <person name="Wang X."/>
            <person name="Zhao J."/>
            <person name="Chu Y."/>
            <person name="Zhou Z."/>
            <person name="Shi Z."/>
            <person name="Song X."/>
            <person name="Li L."/>
        </authorList>
    </citation>
    <scope>X-RAY CRYSTALLOGRAPHY (1.05 ANGSTROMS) OF 780-914 IN COMPLEX WITH CALCIUM</scope>
    <scope>SUBUNIT</scope>
</reference>
<evidence type="ECO:0000250" key="1">
    <source>
        <dbReference type="UniProtKB" id="Q6IMN6"/>
    </source>
</evidence>
<evidence type="ECO:0000255" key="2">
    <source>
        <dbReference type="PROSITE-ProRule" id="PRU00368"/>
    </source>
</evidence>
<evidence type="ECO:0000256" key="3">
    <source>
        <dbReference type="SAM" id="MobiDB-lite"/>
    </source>
</evidence>
<evidence type="ECO:0000269" key="4">
    <source>
    </source>
</evidence>
<evidence type="ECO:0000269" key="5">
    <source>
    </source>
</evidence>
<evidence type="ECO:0000305" key="6"/>
<evidence type="ECO:0000312" key="7">
    <source>
        <dbReference type="EMBL" id="AAH57503.1"/>
    </source>
</evidence>
<evidence type="ECO:0000312" key="8">
    <source>
        <dbReference type="EMBL" id="CAI11565.1"/>
    </source>
</evidence>
<evidence type="ECO:0007744" key="9">
    <source>
        <dbReference type="PDB" id="4OUS"/>
    </source>
</evidence>
<evidence type="ECO:0007829" key="10">
    <source>
        <dbReference type="PDB" id="4OUS"/>
    </source>
</evidence>